<gene>
    <name type="primary">fliE1</name>
    <name type="ordered locus">bll5812</name>
</gene>
<comment type="subcellular location">
    <subcellularLocation>
        <location evidence="1">Bacterial flagellum basal body</location>
    </subcellularLocation>
</comment>
<comment type="similarity">
    <text evidence="2">Belongs to the FliE family.</text>
</comment>
<protein>
    <recommendedName>
        <fullName>Flagellar hook-basal body complex protein FliE 1</fullName>
    </recommendedName>
</protein>
<proteinExistence type="inferred from homology"/>
<feature type="chain" id="PRO_0000105531" description="Flagellar hook-basal body complex protein FliE 1">
    <location>
        <begin position="1"/>
        <end position="102"/>
    </location>
</feature>
<organism>
    <name type="scientific">Bradyrhizobium diazoefficiens (strain JCM 10833 / BCRC 13528 / IAM 13628 / NBRC 14792 / USDA 110)</name>
    <dbReference type="NCBI Taxonomy" id="224911"/>
    <lineage>
        <taxon>Bacteria</taxon>
        <taxon>Pseudomonadati</taxon>
        <taxon>Pseudomonadota</taxon>
        <taxon>Alphaproteobacteria</taxon>
        <taxon>Hyphomicrobiales</taxon>
        <taxon>Nitrobacteraceae</taxon>
        <taxon>Bradyrhizobium</taxon>
    </lineage>
</organism>
<dbReference type="EMBL" id="BA000040">
    <property type="protein sequence ID" value="BAC51077.1"/>
    <property type="molecule type" value="Genomic_DNA"/>
</dbReference>
<dbReference type="RefSeq" id="NP_772452.1">
    <property type="nucleotide sequence ID" value="NC_004463.1"/>
</dbReference>
<dbReference type="SMR" id="Q89I27"/>
<dbReference type="STRING" id="224911.AAV28_26595"/>
<dbReference type="EnsemblBacteria" id="BAC51077">
    <property type="protein sequence ID" value="BAC51077"/>
    <property type="gene ID" value="BAC51077"/>
</dbReference>
<dbReference type="KEGG" id="bja:bll5812"/>
<dbReference type="PATRIC" id="fig|224911.44.peg.5759"/>
<dbReference type="eggNOG" id="COG1677">
    <property type="taxonomic scope" value="Bacteria"/>
</dbReference>
<dbReference type="HOGENOM" id="CLU_147249_2_2_5"/>
<dbReference type="InParanoid" id="Q89I27"/>
<dbReference type="OrthoDB" id="8481852at2"/>
<dbReference type="PhylomeDB" id="Q89I27"/>
<dbReference type="Proteomes" id="UP000002526">
    <property type="component" value="Chromosome"/>
</dbReference>
<dbReference type="GO" id="GO:0009425">
    <property type="term" value="C:bacterial-type flagellum basal body"/>
    <property type="evidence" value="ECO:0007669"/>
    <property type="project" value="UniProtKB-SubCell"/>
</dbReference>
<dbReference type="GO" id="GO:0003774">
    <property type="term" value="F:cytoskeletal motor activity"/>
    <property type="evidence" value="ECO:0007669"/>
    <property type="project" value="InterPro"/>
</dbReference>
<dbReference type="GO" id="GO:0005198">
    <property type="term" value="F:structural molecule activity"/>
    <property type="evidence" value="ECO:0007669"/>
    <property type="project" value="InterPro"/>
</dbReference>
<dbReference type="GO" id="GO:0044780">
    <property type="term" value="P:bacterial-type flagellum assembly"/>
    <property type="evidence" value="ECO:0000318"/>
    <property type="project" value="GO_Central"/>
</dbReference>
<dbReference type="GO" id="GO:0071973">
    <property type="term" value="P:bacterial-type flagellum-dependent cell motility"/>
    <property type="evidence" value="ECO:0007669"/>
    <property type="project" value="InterPro"/>
</dbReference>
<dbReference type="HAMAP" id="MF_00724">
    <property type="entry name" value="FliE"/>
    <property type="match status" value="1"/>
</dbReference>
<dbReference type="InterPro" id="IPR001624">
    <property type="entry name" value="FliE"/>
</dbReference>
<dbReference type="NCBIfam" id="TIGR00205">
    <property type="entry name" value="fliE"/>
    <property type="match status" value="1"/>
</dbReference>
<dbReference type="NCBIfam" id="NF001949">
    <property type="entry name" value="PRK00732.1"/>
    <property type="match status" value="1"/>
</dbReference>
<dbReference type="PANTHER" id="PTHR34653">
    <property type="match status" value="1"/>
</dbReference>
<dbReference type="PANTHER" id="PTHR34653:SF1">
    <property type="entry name" value="FLAGELLAR HOOK-BASAL BODY COMPLEX PROTEIN FLIE"/>
    <property type="match status" value="1"/>
</dbReference>
<dbReference type="Pfam" id="PF02049">
    <property type="entry name" value="FliE"/>
    <property type="match status" value="1"/>
</dbReference>
<dbReference type="PRINTS" id="PR01006">
    <property type="entry name" value="FLGHOOKFLIE"/>
</dbReference>
<evidence type="ECO:0000250" key="1"/>
<evidence type="ECO:0000305" key="2"/>
<reference key="1">
    <citation type="journal article" date="2002" name="DNA Res.">
        <title>Complete genomic sequence of nitrogen-fixing symbiotic bacterium Bradyrhizobium japonicum USDA110.</title>
        <authorList>
            <person name="Kaneko T."/>
            <person name="Nakamura Y."/>
            <person name="Sato S."/>
            <person name="Minamisawa K."/>
            <person name="Uchiumi T."/>
            <person name="Sasamoto S."/>
            <person name="Watanabe A."/>
            <person name="Idesawa K."/>
            <person name="Iriguchi M."/>
            <person name="Kawashima K."/>
            <person name="Kohara M."/>
            <person name="Matsumoto M."/>
            <person name="Shimpo S."/>
            <person name="Tsuruoka H."/>
            <person name="Wada T."/>
            <person name="Yamada M."/>
            <person name="Tabata S."/>
        </authorList>
    </citation>
    <scope>NUCLEOTIDE SEQUENCE [LARGE SCALE GENOMIC DNA]</scope>
    <source>
        <strain>JCM 10833 / BCRC 13528 / IAM 13628 / NBRC 14792 / USDA 110</strain>
    </source>
</reference>
<keyword id="KW-0975">Bacterial flagellum</keyword>
<keyword id="KW-1185">Reference proteome</keyword>
<accession>Q89I27</accession>
<name>FLIE1_BRADU</name>
<sequence length="102" mass="10381">MASPTIAANAYANLARVLENSGAGKGSEASGQSFASLLKDAVGSVMESGRKSDAQTVAMAAGKANVMDVVTAVADTDVAVSTLVSVRDRVISAYEDIMKMPI</sequence>